<proteinExistence type="inferred from homology"/>
<protein>
    <recommendedName>
        <fullName evidence="1">Adapter protein MecA</fullName>
    </recommendedName>
</protein>
<organism>
    <name type="scientific">Streptococcus pyogenes serotype M6 (strain ATCC BAA-946 / MGAS10394)</name>
    <dbReference type="NCBI Taxonomy" id="286636"/>
    <lineage>
        <taxon>Bacteria</taxon>
        <taxon>Bacillati</taxon>
        <taxon>Bacillota</taxon>
        <taxon>Bacilli</taxon>
        <taxon>Lactobacillales</taxon>
        <taxon>Streptococcaceae</taxon>
        <taxon>Streptococcus</taxon>
    </lineage>
</organism>
<evidence type="ECO:0000255" key="1">
    <source>
        <dbReference type="HAMAP-Rule" id="MF_01124"/>
    </source>
</evidence>
<evidence type="ECO:0000305" key="2"/>
<sequence>MEMKQISETTLKITISMDDLEERGMELKDFLIPQEKTEEFFYSVMDELDLPDNFKDSGMLSFRVTPRKDRLDVFVTKSEINKDINLEDLAEFGDMSQMTPEDFFKSLEQSMREKGDVKAHEKLEQIEEIMEDVVEATLANQSEAADPSTNHESEPLDYVHYVLDFSTITEAVAFAKTIDFSIEASELYKGSNCYHMTILLDVQQQPSYFANVMYARLIEHANPGSKTRAYLQEHGLQLMLDGAVEQLQKIELG</sequence>
<comment type="function">
    <text evidence="1">Enables the recognition and targeting of unfolded and aggregated proteins to the ClpC protease or to other proteins involved in proteolysis.</text>
</comment>
<comment type="subunit">
    <text evidence="1">Homodimer.</text>
</comment>
<comment type="domain">
    <text>The N-terminal domain probably binds unfolded/aggregated proteins; the C-terminal domain interacts with ClpC.</text>
</comment>
<comment type="similarity">
    <text evidence="1">Belongs to the MecA family.</text>
</comment>
<comment type="sequence caution" evidence="2">
    <conflict type="erroneous initiation">
        <sequence resource="EMBL-CDS" id="AAT86406"/>
    </conflict>
</comment>
<dbReference type="EMBL" id="CP000003">
    <property type="protein sequence ID" value="AAT86406.1"/>
    <property type="status" value="ALT_INIT"/>
    <property type="molecule type" value="Genomic_DNA"/>
</dbReference>
<dbReference type="RefSeq" id="WP_011106593.1">
    <property type="nucleotide sequence ID" value="NC_006086.1"/>
</dbReference>
<dbReference type="SMR" id="Q5XDV7"/>
<dbReference type="KEGG" id="spa:M6_Spy0271"/>
<dbReference type="HOGENOM" id="CLU_071496_1_0_9"/>
<dbReference type="Proteomes" id="UP000001167">
    <property type="component" value="Chromosome"/>
</dbReference>
<dbReference type="GO" id="GO:0030674">
    <property type="term" value="F:protein-macromolecule adaptor activity"/>
    <property type="evidence" value="ECO:0007669"/>
    <property type="project" value="UniProtKB-UniRule"/>
</dbReference>
<dbReference type="Gene3D" id="3.30.70.1950">
    <property type="match status" value="1"/>
</dbReference>
<dbReference type="HAMAP" id="MF_01124">
    <property type="entry name" value="MecA"/>
    <property type="match status" value="1"/>
</dbReference>
<dbReference type="InterPro" id="IPR038471">
    <property type="entry name" value="MecA_C_sf"/>
</dbReference>
<dbReference type="InterPro" id="IPR008681">
    <property type="entry name" value="Neg-reg_MecA"/>
</dbReference>
<dbReference type="NCBIfam" id="NF002643">
    <property type="entry name" value="PRK02315.1-4"/>
    <property type="match status" value="1"/>
</dbReference>
<dbReference type="PANTHER" id="PTHR39161">
    <property type="entry name" value="ADAPTER PROTEIN MECA"/>
    <property type="match status" value="1"/>
</dbReference>
<dbReference type="PANTHER" id="PTHR39161:SF1">
    <property type="entry name" value="ADAPTER PROTEIN MECA 1"/>
    <property type="match status" value="1"/>
</dbReference>
<dbReference type="Pfam" id="PF05389">
    <property type="entry name" value="MecA"/>
    <property type="match status" value="1"/>
</dbReference>
<dbReference type="PIRSF" id="PIRSF029008">
    <property type="entry name" value="MecA"/>
    <property type="match status" value="1"/>
</dbReference>
<gene>
    <name evidence="1" type="primary">mecA</name>
    <name type="ordered locus">M6_Spy0271</name>
</gene>
<feature type="chain" id="PRO_0000212293" description="Adapter protein MecA">
    <location>
        <begin position="1"/>
        <end position="253"/>
    </location>
</feature>
<accession>Q5XDV7</accession>
<reference key="1">
    <citation type="journal article" date="2004" name="J. Infect. Dis.">
        <title>Progress toward characterization of the group A Streptococcus metagenome: complete genome sequence of a macrolide-resistant serotype M6 strain.</title>
        <authorList>
            <person name="Banks D.J."/>
            <person name="Porcella S.F."/>
            <person name="Barbian K.D."/>
            <person name="Beres S.B."/>
            <person name="Philips L.E."/>
            <person name="Voyich J.M."/>
            <person name="DeLeo F.R."/>
            <person name="Martin J.M."/>
            <person name="Somerville G.A."/>
            <person name="Musser J.M."/>
        </authorList>
    </citation>
    <scope>NUCLEOTIDE SEQUENCE [LARGE SCALE GENOMIC DNA]</scope>
    <source>
        <strain>ATCC BAA-946 / MGAS10394</strain>
    </source>
</reference>
<name>MECA_STRP6</name>